<name>SYI_PEDPA</name>
<gene>
    <name evidence="1" type="primary">ileS</name>
    <name type="ordered locus">PEPE_1179</name>
</gene>
<feature type="chain" id="PRO_1000022096" description="Isoleucine--tRNA ligase">
    <location>
        <begin position="1"/>
        <end position="933"/>
    </location>
</feature>
<feature type="short sequence motif" description="'HIGH' region">
    <location>
        <begin position="57"/>
        <end position="67"/>
    </location>
</feature>
<feature type="short sequence motif" description="'KMSKS' region">
    <location>
        <begin position="597"/>
        <end position="601"/>
    </location>
</feature>
<feature type="binding site" evidence="1">
    <location>
        <position position="556"/>
    </location>
    <ligand>
        <name>L-isoleucyl-5'-AMP</name>
        <dbReference type="ChEBI" id="CHEBI:178002"/>
    </ligand>
</feature>
<feature type="binding site" evidence="1">
    <location>
        <position position="600"/>
    </location>
    <ligand>
        <name>ATP</name>
        <dbReference type="ChEBI" id="CHEBI:30616"/>
    </ligand>
</feature>
<feature type="binding site" evidence="1">
    <location>
        <position position="891"/>
    </location>
    <ligand>
        <name>Zn(2+)</name>
        <dbReference type="ChEBI" id="CHEBI:29105"/>
    </ligand>
</feature>
<feature type="binding site" evidence="1">
    <location>
        <position position="894"/>
    </location>
    <ligand>
        <name>Zn(2+)</name>
        <dbReference type="ChEBI" id="CHEBI:29105"/>
    </ligand>
</feature>
<feature type="binding site" evidence="1">
    <location>
        <position position="911"/>
    </location>
    <ligand>
        <name>Zn(2+)</name>
        <dbReference type="ChEBI" id="CHEBI:29105"/>
    </ligand>
</feature>
<feature type="binding site" evidence="1">
    <location>
        <position position="914"/>
    </location>
    <ligand>
        <name>Zn(2+)</name>
        <dbReference type="ChEBI" id="CHEBI:29105"/>
    </ligand>
</feature>
<comment type="function">
    <text evidence="1">Catalyzes the attachment of isoleucine to tRNA(Ile). As IleRS can inadvertently accommodate and process structurally similar amino acids such as valine, to avoid such errors it has two additional distinct tRNA(Ile)-dependent editing activities. One activity is designated as 'pretransfer' editing and involves the hydrolysis of activated Val-AMP. The other activity is designated 'posttransfer' editing and involves deacylation of mischarged Val-tRNA(Ile).</text>
</comment>
<comment type="catalytic activity">
    <reaction evidence="1">
        <text>tRNA(Ile) + L-isoleucine + ATP = L-isoleucyl-tRNA(Ile) + AMP + diphosphate</text>
        <dbReference type="Rhea" id="RHEA:11060"/>
        <dbReference type="Rhea" id="RHEA-COMP:9666"/>
        <dbReference type="Rhea" id="RHEA-COMP:9695"/>
        <dbReference type="ChEBI" id="CHEBI:30616"/>
        <dbReference type="ChEBI" id="CHEBI:33019"/>
        <dbReference type="ChEBI" id="CHEBI:58045"/>
        <dbReference type="ChEBI" id="CHEBI:78442"/>
        <dbReference type="ChEBI" id="CHEBI:78528"/>
        <dbReference type="ChEBI" id="CHEBI:456215"/>
        <dbReference type="EC" id="6.1.1.5"/>
    </reaction>
</comment>
<comment type="cofactor">
    <cofactor evidence="1">
        <name>Zn(2+)</name>
        <dbReference type="ChEBI" id="CHEBI:29105"/>
    </cofactor>
    <text evidence="1">Binds 1 zinc ion per subunit.</text>
</comment>
<comment type="subunit">
    <text evidence="1">Monomer.</text>
</comment>
<comment type="subcellular location">
    <subcellularLocation>
        <location evidence="1">Cytoplasm</location>
    </subcellularLocation>
</comment>
<comment type="domain">
    <text evidence="1">IleRS has two distinct active sites: one for aminoacylation and one for editing. The misactivated valine is translocated from the active site to the editing site, which sterically excludes the correctly activated isoleucine. The single editing site contains two valyl binding pockets, one specific for each substrate (Val-AMP or Val-tRNA(Ile)).</text>
</comment>
<comment type="similarity">
    <text evidence="1">Belongs to the class-I aminoacyl-tRNA synthetase family. IleS type 1 subfamily.</text>
</comment>
<sequence>MRVKDTLNLGKTKFKMRGNLPVNEQKREDIWAENKIYEQRQKLNEGKPSFVLHDGPPYANGNIHMGHAMNKISKDIIVRYKSMSGFRSPFVPGWDTHGLPIEQQLTKEGYDRKKMSTADFRKLCHEYALKQVDKQRTDFKRLGISAEWDHPYLTLNPEFEAQEIRTFGRMAELGLIYRGKKPVFWSWSSESAMAEAEVEYHDVTSPSAFYAEKVNDGKGVLDENTYFVVWTTTPWTIPASEGITIDAGFDYSVVQPAGEDRKFVIATDRLNYAAEQFGWEDVQTLQVIRGRELDRIKAIHPFDNDRELVVMLGDFVTLDSGTGLVHTAPGFGEDDFRVGKEYGLDIFVPVDDRGYMTAEAGPDFEGVFYEDANAIALDKLKASNALLKQMDYVHSYPFDWRTKKPIIFRATPQWFASVDKIRDQILEAIEDVEFLPDWGQKRLHNMIRDRGDWVISRQRVWGVPLPIFYAEDGTPILEKETINHVADLFEKNGSDIWFQWEAKDLLPEGYSNEHSPNGEFTKENDIMDVWFDSGSSHQGVLAQRDYLEYPADLVLEGSDQYRGWFNSSLITSVAVSGKAPYKKVISQGFTLDGKGHKMSKSLGNTIVPDEINKKMGAEIIRLWVSSIDSSSDVRVSQENFVKASESYKKIRNTVRYLLANTSDFDPKENGVDYNELRPEDRYMLVQFNELISKIRTSYDNYDFIDIYKTLLNYIITDLSAFYLDFAKDVVYIEPENSLKRRSMQTVFYKILVGLTKLITPILPHTAEEIWEYLREPEEFVQLAEMPEVANYTDGADLLSKWQSIKELRSHVLKALEEARDSKMIGKSMEAKATLYLDESTKQLVDTLGVDLRLILIVSQLEVKALSEAPKDAAIFDDQLAVEITPAQGEVCERCRMTKTDVGSDEHFATLCASCAQIVTENYPEAITEGFEEK</sequence>
<protein>
    <recommendedName>
        <fullName evidence="1">Isoleucine--tRNA ligase</fullName>
        <ecNumber evidence="1">6.1.1.5</ecNumber>
    </recommendedName>
    <alternativeName>
        <fullName evidence="1">Isoleucyl-tRNA synthetase</fullName>
        <shortName evidence="1">IleRS</shortName>
    </alternativeName>
</protein>
<proteinExistence type="inferred from homology"/>
<reference key="1">
    <citation type="journal article" date="2006" name="Proc. Natl. Acad. Sci. U.S.A.">
        <title>Comparative genomics of the lactic acid bacteria.</title>
        <authorList>
            <person name="Makarova K.S."/>
            <person name="Slesarev A."/>
            <person name="Wolf Y.I."/>
            <person name="Sorokin A."/>
            <person name="Mirkin B."/>
            <person name="Koonin E.V."/>
            <person name="Pavlov A."/>
            <person name="Pavlova N."/>
            <person name="Karamychev V."/>
            <person name="Polouchine N."/>
            <person name="Shakhova V."/>
            <person name="Grigoriev I."/>
            <person name="Lou Y."/>
            <person name="Rohksar D."/>
            <person name="Lucas S."/>
            <person name="Huang K."/>
            <person name="Goodstein D.M."/>
            <person name="Hawkins T."/>
            <person name="Plengvidhya V."/>
            <person name="Welker D."/>
            <person name="Hughes J."/>
            <person name="Goh Y."/>
            <person name="Benson A."/>
            <person name="Baldwin K."/>
            <person name="Lee J.-H."/>
            <person name="Diaz-Muniz I."/>
            <person name="Dosti B."/>
            <person name="Smeianov V."/>
            <person name="Wechter W."/>
            <person name="Barabote R."/>
            <person name="Lorca G."/>
            <person name="Altermann E."/>
            <person name="Barrangou R."/>
            <person name="Ganesan B."/>
            <person name="Xie Y."/>
            <person name="Rawsthorne H."/>
            <person name="Tamir D."/>
            <person name="Parker C."/>
            <person name="Breidt F."/>
            <person name="Broadbent J.R."/>
            <person name="Hutkins R."/>
            <person name="O'Sullivan D."/>
            <person name="Steele J."/>
            <person name="Unlu G."/>
            <person name="Saier M.H. Jr."/>
            <person name="Klaenhammer T."/>
            <person name="Richardson P."/>
            <person name="Kozyavkin S."/>
            <person name="Weimer B.C."/>
            <person name="Mills D.A."/>
        </authorList>
    </citation>
    <scope>NUCLEOTIDE SEQUENCE [LARGE SCALE GENOMIC DNA]</scope>
    <source>
        <strain>ATCC 25745 / CCUG 21536 / LMG 10740 / 183-1w</strain>
    </source>
</reference>
<keyword id="KW-0030">Aminoacyl-tRNA synthetase</keyword>
<keyword id="KW-0067">ATP-binding</keyword>
<keyword id="KW-0963">Cytoplasm</keyword>
<keyword id="KW-0436">Ligase</keyword>
<keyword id="KW-0479">Metal-binding</keyword>
<keyword id="KW-0547">Nucleotide-binding</keyword>
<keyword id="KW-0648">Protein biosynthesis</keyword>
<keyword id="KW-0862">Zinc</keyword>
<dbReference type="EC" id="6.1.1.5" evidence="1"/>
<dbReference type="EMBL" id="CP000422">
    <property type="protein sequence ID" value="ABJ68233.1"/>
    <property type="molecule type" value="Genomic_DNA"/>
</dbReference>
<dbReference type="RefSeq" id="WP_011673537.1">
    <property type="nucleotide sequence ID" value="NC_008525.1"/>
</dbReference>
<dbReference type="SMR" id="Q03EY9"/>
<dbReference type="STRING" id="278197.PEPE_1179"/>
<dbReference type="GeneID" id="33062201"/>
<dbReference type="KEGG" id="ppe:PEPE_1179"/>
<dbReference type="eggNOG" id="COG0060">
    <property type="taxonomic scope" value="Bacteria"/>
</dbReference>
<dbReference type="HOGENOM" id="CLU_001493_7_1_9"/>
<dbReference type="OrthoDB" id="9810365at2"/>
<dbReference type="Proteomes" id="UP000000773">
    <property type="component" value="Chromosome"/>
</dbReference>
<dbReference type="GO" id="GO:0005829">
    <property type="term" value="C:cytosol"/>
    <property type="evidence" value="ECO:0007669"/>
    <property type="project" value="TreeGrafter"/>
</dbReference>
<dbReference type="GO" id="GO:0002161">
    <property type="term" value="F:aminoacyl-tRNA deacylase activity"/>
    <property type="evidence" value="ECO:0007669"/>
    <property type="project" value="InterPro"/>
</dbReference>
<dbReference type="GO" id="GO:0005524">
    <property type="term" value="F:ATP binding"/>
    <property type="evidence" value="ECO:0007669"/>
    <property type="project" value="UniProtKB-UniRule"/>
</dbReference>
<dbReference type="GO" id="GO:0004822">
    <property type="term" value="F:isoleucine-tRNA ligase activity"/>
    <property type="evidence" value="ECO:0007669"/>
    <property type="project" value="UniProtKB-UniRule"/>
</dbReference>
<dbReference type="GO" id="GO:0000049">
    <property type="term" value="F:tRNA binding"/>
    <property type="evidence" value="ECO:0007669"/>
    <property type="project" value="InterPro"/>
</dbReference>
<dbReference type="GO" id="GO:0008270">
    <property type="term" value="F:zinc ion binding"/>
    <property type="evidence" value="ECO:0007669"/>
    <property type="project" value="UniProtKB-UniRule"/>
</dbReference>
<dbReference type="GO" id="GO:0006428">
    <property type="term" value="P:isoleucyl-tRNA aminoacylation"/>
    <property type="evidence" value="ECO:0007669"/>
    <property type="project" value="UniProtKB-UniRule"/>
</dbReference>
<dbReference type="CDD" id="cd07960">
    <property type="entry name" value="Anticodon_Ia_Ile_BEm"/>
    <property type="match status" value="1"/>
</dbReference>
<dbReference type="CDD" id="cd00818">
    <property type="entry name" value="IleRS_core"/>
    <property type="match status" value="1"/>
</dbReference>
<dbReference type="FunFam" id="1.10.10.830:FF:000001">
    <property type="entry name" value="Isoleucine--tRNA ligase"/>
    <property type="match status" value="1"/>
</dbReference>
<dbReference type="FunFam" id="1.10.730.20:FF:000001">
    <property type="entry name" value="Isoleucine--tRNA ligase"/>
    <property type="match status" value="1"/>
</dbReference>
<dbReference type="FunFam" id="3.40.50.620:FF:000152">
    <property type="entry name" value="Isoleucine--tRNA ligase"/>
    <property type="match status" value="1"/>
</dbReference>
<dbReference type="FunFam" id="3.90.740.10:FF:000006">
    <property type="entry name" value="Isoleucine--tRNA ligase"/>
    <property type="match status" value="1"/>
</dbReference>
<dbReference type="Gene3D" id="1.10.730.20">
    <property type="match status" value="1"/>
</dbReference>
<dbReference type="Gene3D" id="3.40.50.620">
    <property type="entry name" value="HUPs"/>
    <property type="match status" value="2"/>
</dbReference>
<dbReference type="Gene3D" id="1.10.10.830">
    <property type="entry name" value="Ile-tRNA synthetase CP2 domain-like"/>
    <property type="match status" value="1"/>
</dbReference>
<dbReference type="Gene3D" id="3.90.740.10">
    <property type="entry name" value="Valyl/Leucyl/Isoleucyl-tRNA synthetase, editing domain"/>
    <property type="match status" value="1"/>
</dbReference>
<dbReference type="HAMAP" id="MF_02002">
    <property type="entry name" value="Ile_tRNA_synth_type1"/>
    <property type="match status" value="1"/>
</dbReference>
<dbReference type="InterPro" id="IPR001412">
    <property type="entry name" value="aa-tRNA-synth_I_CS"/>
</dbReference>
<dbReference type="InterPro" id="IPR002300">
    <property type="entry name" value="aa-tRNA-synth_Ia"/>
</dbReference>
<dbReference type="InterPro" id="IPR033708">
    <property type="entry name" value="Anticodon_Ile_BEm"/>
</dbReference>
<dbReference type="InterPro" id="IPR002301">
    <property type="entry name" value="Ile-tRNA-ligase"/>
</dbReference>
<dbReference type="InterPro" id="IPR023585">
    <property type="entry name" value="Ile-tRNA-ligase_type1"/>
</dbReference>
<dbReference type="InterPro" id="IPR050081">
    <property type="entry name" value="Ile-tRNA_ligase"/>
</dbReference>
<dbReference type="InterPro" id="IPR013155">
    <property type="entry name" value="M/V/L/I-tRNA-synth_anticd-bd"/>
</dbReference>
<dbReference type="InterPro" id="IPR014729">
    <property type="entry name" value="Rossmann-like_a/b/a_fold"/>
</dbReference>
<dbReference type="InterPro" id="IPR009080">
    <property type="entry name" value="tRNAsynth_Ia_anticodon-bd"/>
</dbReference>
<dbReference type="InterPro" id="IPR009008">
    <property type="entry name" value="Val/Leu/Ile-tRNA-synth_edit"/>
</dbReference>
<dbReference type="InterPro" id="IPR010663">
    <property type="entry name" value="Znf_FPG/IleRS"/>
</dbReference>
<dbReference type="NCBIfam" id="TIGR00392">
    <property type="entry name" value="ileS"/>
    <property type="match status" value="1"/>
</dbReference>
<dbReference type="PANTHER" id="PTHR42765:SF1">
    <property type="entry name" value="ISOLEUCINE--TRNA LIGASE, MITOCHONDRIAL"/>
    <property type="match status" value="1"/>
</dbReference>
<dbReference type="PANTHER" id="PTHR42765">
    <property type="entry name" value="SOLEUCYL-TRNA SYNTHETASE"/>
    <property type="match status" value="1"/>
</dbReference>
<dbReference type="Pfam" id="PF08264">
    <property type="entry name" value="Anticodon_1"/>
    <property type="match status" value="1"/>
</dbReference>
<dbReference type="Pfam" id="PF00133">
    <property type="entry name" value="tRNA-synt_1"/>
    <property type="match status" value="1"/>
</dbReference>
<dbReference type="Pfam" id="PF06827">
    <property type="entry name" value="zf-FPG_IleRS"/>
    <property type="match status" value="1"/>
</dbReference>
<dbReference type="PRINTS" id="PR00984">
    <property type="entry name" value="TRNASYNTHILE"/>
</dbReference>
<dbReference type="SUPFAM" id="SSF47323">
    <property type="entry name" value="Anticodon-binding domain of a subclass of class I aminoacyl-tRNA synthetases"/>
    <property type="match status" value="1"/>
</dbReference>
<dbReference type="SUPFAM" id="SSF52374">
    <property type="entry name" value="Nucleotidylyl transferase"/>
    <property type="match status" value="1"/>
</dbReference>
<dbReference type="SUPFAM" id="SSF50677">
    <property type="entry name" value="ValRS/IleRS/LeuRS editing domain"/>
    <property type="match status" value="1"/>
</dbReference>
<dbReference type="PROSITE" id="PS00178">
    <property type="entry name" value="AA_TRNA_LIGASE_I"/>
    <property type="match status" value="1"/>
</dbReference>
<organism>
    <name type="scientific">Pediococcus pentosaceus (strain ATCC 25745 / CCUG 21536 / LMG 10740 / 183-1w)</name>
    <dbReference type="NCBI Taxonomy" id="278197"/>
    <lineage>
        <taxon>Bacteria</taxon>
        <taxon>Bacillati</taxon>
        <taxon>Bacillota</taxon>
        <taxon>Bacilli</taxon>
        <taxon>Lactobacillales</taxon>
        <taxon>Lactobacillaceae</taxon>
        <taxon>Pediococcus</taxon>
    </lineage>
</organism>
<accession>Q03EY9</accession>
<evidence type="ECO:0000255" key="1">
    <source>
        <dbReference type="HAMAP-Rule" id="MF_02002"/>
    </source>
</evidence>